<keyword id="KW-0496">Mitochondrion</keyword>
<keyword id="KW-1185">Reference proteome</keyword>
<keyword id="KW-0687">Ribonucleoprotein</keyword>
<keyword id="KW-0689">Ribosomal protein</keyword>
<organism>
    <name type="scientific">Aspergillus niger (strain ATCC MYA-4892 / CBS 513.88 / FGSC A1513)</name>
    <dbReference type="NCBI Taxonomy" id="425011"/>
    <lineage>
        <taxon>Eukaryota</taxon>
        <taxon>Fungi</taxon>
        <taxon>Dikarya</taxon>
        <taxon>Ascomycota</taxon>
        <taxon>Pezizomycotina</taxon>
        <taxon>Eurotiomycetes</taxon>
        <taxon>Eurotiomycetidae</taxon>
        <taxon>Eurotiales</taxon>
        <taxon>Aspergillaceae</taxon>
        <taxon>Aspergillus</taxon>
        <taxon>Aspergillus subgen. Circumdati</taxon>
    </lineage>
</organism>
<name>RT25_ASPNC</name>
<protein>
    <recommendedName>
        <fullName evidence="3">Small ribosomal subunit protein mS23</fullName>
    </recommendedName>
    <alternativeName>
        <fullName>37S ribosomal protein S25, mitochondrial</fullName>
    </alternativeName>
</protein>
<accession>A5AAL8</accession>
<feature type="chain" id="PRO_0000343543" description="Small ribosomal subunit protein mS23">
    <location>
        <begin position="1"/>
        <end position="262"/>
    </location>
</feature>
<feature type="region of interest" description="Disordered" evidence="2">
    <location>
        <begin position="242"/>
        <end position="262"/>
    </location>
</feature>
<feature type="compositionally biased region" description="Acidic residues" evidence="2">
    <location>
        <begin position="242"/>
        <end position="254"/>
    </location>
</feature>
<evidence type="ECO:0000250" key="1"/>
<evidence type="ECO:0000256" key="2">
    <source>
        <dbReference type="SAM" id="MobiDB-lite"/>
    </source>
</evidence>
<evidence type="ECO:0000305" key="3"/>
<reference key="1">
    <citation type="journal article" date="2007" name="Nat. Biotechnol.">
        <title>Genome sequencing and analysis of the versatile cell factory Aspergillus niger CBS 513.88.</title>
        <authorList>
            <person name="Pel H.J."/>
            <person name="de Winde J.H."/>
            <person name="Archer D.B."/>
            <person name="Dyer P.S."/>
            <person name="Hofmann G."/>
            <person name="Schaap P.J."/>
            <person name="Turner G."/>
            <person name="de Vries R.P."/>
            <person name="Albang R."/>
            <person name="Albermann K."/>
            <person name="Andersen M.R."/>
            <person name="Bendtsen J.D."/>
            <person name="Benen J.A.E."/>
            <person name="van den Berg M."/>
            <person name="Breestraat S."/>
            <person name="Caddick M.X."/>
            <person name="Contreras R."/>
            <person name="Cornell M."/>
            <person name="Coutinho P.M."/>
            <person name="Danchin E.G.J."/>
            <person name="Debets A.J.M."/>
            <person name="Dekker P."/>
            <person name="van Dijck P.W.M."/>
            <person name="van Dijk A."/>
            <person name="Dijkhuizen L."/>
            <person name="Driessen A.J.M."/>
            <person name="d'Enfert C."/>
            <person name="Geysens S."/>
            <person name="Goosen C."/>
            <person name="Groot G.S.P."/>
            <person name="de Groot P.W.J."/>
            <person name="Guillemette T."/>
            <person name="Henrissat B."/>
            <person name="Herweijer M."/>
            <person name="van den Hombergh J.P.T.W."/>
            <person name="van den Hondel C.A.M.J.J."/>
            <person name="van der Heijden R.T.J.M."/>
            <person name="van der Kaaij R.M."/>
            <person name="Klis F.M."/>
            <person name="Kools H.J."/>
            <person name="Kubicek C.P."/>
            <person name="van Kuyk P.A."/>
            <person name="Lauber J."/>
            <person name="Lu X."/>
            <person name="van der Maarel M.J.E.C."/>
            <person name="Meulenberg R."/>
            <person name="Menke H."/>
            <person name="Mortimer M.A."/>
            <person name="Nielsen J."/>
            <person name="Oliver S.G."/>
            <person name="Olsthoorn M."/>
            <person name="Pal K."/>
            <person name="van Peij N.N.M.E."/>
            <person name="Ram A.F.J."/>
            <person name="Rinas U."/>
            <person name="Roubos J.A."/>
            <person name="Sagt C.M.J."/>
            <person name="Schmoll M."/>
            <person name="Sun J."/>
            <person name="Ussery D."/>
            <person name="Varga J."/>
            <person name="Vervecken W."/>
            <person name="van de Vondervoort P.J.J."/>
            <person name="Wedler H."/>
            <person name="Woesten H.A.B."/>
            <person name="Zeng A.-P."/>
            <person name="van Ooyen A.J.J."/>
            <person name="Visser J."/>
            <person name="Stam H."/>
        </authorList>
    </citation>
    <scope>NUCLEOTIDE SEQUENCE [LARGE SCALE GENOMIC DNA]</scope>
    <source>
        <strain>ATCC MYA-4892 / CBS 513.88 / FGSC A1513</strain>
    </source>
</reference>
<gene>
    <name type="primary">rsm25</name>
    <name type="ORF">An04g01650</name>
</gene>
<proteinExistence type="inferred from homology"/>
<comment type="subunit">
    <text evidence="1">Component of the mitochondrial small ribosomal subunit.</text>
</comment>
<comment type="subcellular location">
    <subcellularLocation>
        <location evidence="1">Mitochondrion</location>
    </subcellularLocation>
</comment>
<comment type="similarity">
    <text evidence="3">Belongs to the mitochondrion-specific ribosomal protein mS23 family.</text>
</comment>
<dbReference type="EMBL" id="AM270070">
    <property type="protein sequence ID" value="CAK47928.1"/>
    <property type="molecule type" value="Genomic_DNA"/>
</dbReference>
<dbReference type="RefSeq" id="XP_001401532.1">
    <property type="nucleotide sequence ID" value="XM_001401495.1"/>
</dbReference>
<dbReference type="SMR" id="A5AAL8"/>
<dbReference type="EnsemblFungi" id="CAK47928">
    <property type="protein sequence ID" value="CAK47928"/>
    <property type="gene ID" value="An04g01650"/>
</dbReference>
<dbReference type="GeneID" id="4990569"/>
<dbReference type="KEGG" id="ang:An04g01650"/>
<dbReference type="VEuPathDB" id="FungiDB:An04g01650"/>
<dbReference type="HOGENOM" id="CLU_081350_0_0_1"/>
<dbReference type="Proteomes" id="UP000006706">
    <property type="component" value="Chromosome 6L"/>
</dbReference>
<dbReference type="GO" id="GO:0005763">
    <property type="term" value="C:mitochondrial small ribosomal subunit"/>
    <property type="evidence" value="ECO:0007669"/>
    <property type="project" value="InterPro"/>
</dbReference>
<dbReference type="GO" id="GO:0003735">
    <property type="term" value="F:structural constituent of ribosome"/>
    <property type="evidence" value="ECO:0007669"/>
    <property type="project" value="InterPro"/>
</dbReference>
<dbReference type="InterPro" id="IPR016939">
    <property type="entry name" value="Ribosomal_mS23_fun"/>
</dbReference>
<dbReference type="PANTHER" id="PTHR37799">
    <property type="entry name" value="37S RIBOSOMAL PROTEIN S25, MITOCHONDRIAL"/>
    <property type="match status" value="1"/>
</dbReference>
<dbReference type="PANTHER" id="PTHR37799:SF1">
    <property type="entry name" value="SMALL RIBOSOMAL SUBUNIT PROTEIN MS23"/>
    <property type="match status" value="1"/>
</dbReference>
<dbReference type="Pfam" id="PF13741">
    <property type="entry name" value="MRP-S25"/>
    <property type="match status" value="1"/>
</dbReference>
<dbReference type="PIRSF" id="PIRSF029764">
    <property type="entry name" value="RSM25"/>
    <property type="match status" value="1"/>
</dbReference>
<sequence length="262" mass="30575">MGKYNLTALRVRQIAVAQQSAGKLRQTPKWLDIMHDVPPTEVLVRNRPQQHQLVRQRLKTVPGASRPQAVFEVQEKRIKPKKASRMFQPVEIKYEEDQLRKEFFRDHPWELARPRVLVEKSGKDFERYNWSRLQQRGKHLDGESVVQRQLWLLNNVPDMTKSAAYDIARREFYRLRLQEDIERRVAAEEAEATGAVFGPTRLQIGMDLENKEYERWKEWAKLQAQLSDQRMAAFLGAPEVQAAEEQETSLDDDATEKVAVAA</sequence>